<organism>
    <name type="scientific">Homo sapiens</name>
    <name type="common">Human</name>
    <dbReference type="NCBI Taxonomy" id="9606"/>
    <lineage>
        <taxon>Eukaryota</taxon>
        <taxon>Metazoa</taxon>
        <taxon>Chordata</taxon>
        <taxon>Craniata</taxon>
        <taxon>Vertebrata</taxon>
        <taxon>Euteleostomi</taxon>
        <taxon>Mammalia</taxon>
        <taxon>Eutheria</taxon>
        <taxon>Euarchontoglires</taxon>
        <taxon>Primates</taxon>
        <taxon>Haplorrhini</taxon>
        <taxon>Catarrhini</taxon>
        <taxon>Hominidae</taxon>
        <taxon>Homo</taxon>
    </lineage>
</organism>
<protein>
    <recommendedName>
        <fullName>Disco-interacting protein 2 homolog C</fullName>
        <shortName>DIP2 homolog C</shortName>
    </recommendedName>
</protein>
<feature type="chain" id="PRO_0000050782" description="Disco-interacting protein 2 homolog C">
    <location>
        <begin position="1"/>
        <end position="1556"/>
    </location>
</feature>
<feature type="domain" description="DMAP1-binding" evidence="1">
    <location>
        <begin position="7"/>
        <end position="120"/>
    </location>
</feature>
<feature type="region of interest" description="Disordered" evidence="2">
    <location>
        <begin position="47"/>
        <end position="157"/>
    </location>
</feature>
<feature type="region of interest" description="Disordered" evidence="2">
    <location>
        <begin position="170"/>
        <end position="189"/>
    </location>
</feature>
<feature type="compositionally biased region" description="Basic and acidic residues" evidence="2">
    <location>
        <begin position="81"/>
        <end position="93"/>
    </location>
</feature>
<feature type="compositionally biased region" description="Polar residues" evidence="2">
    <location>
        <begin position="120"/>
        <end position="136"/>
    </location>
</feature>
<feature type="compositionally biased region" description="Polar residues" evidence="2">
    <location>
        <begin position="144"/>
        <end position="157"/>
    </location>
</feature>
<feature type="compositionally biased region" description="Low complexity" evidence="2">
    <location>
        <begin position="170"/>
        <end position="183"/>
    </location>
</feature>
<feature type="modified residue" description="Phosphothreonine" evidence="6">
    <location>
        <position position="264"/>
    </location>
</feature>
<feature type="splice variant" id="VSP_056898" description="In isoform 2." evidence="4">
    <location>
        <begin position="1"/>
        <end position="679"/>
    </location>
</feature>
<feature type="splice variant" id="VSP_056899" description="In isoform 2." evidence="4">
    <original>GAIANSLTCVQLHKRAEKIAVMLMERGHLQDGDHVALVYPPGIDLIAAFYGCLYA</original>
    <variation>VRRGAGLPWLLASRGLAWFLGALLLLSLNPFASVLWEFFLCFAILTETFVPRDCF</variation>
    <location>
        <begin position="996"/>
        <end position="1050"/>
    </location>
</feature>
<feature type="splice variant" id="VSP_056900" description="In isoform 2." evidence="4">
    <location>
        <begin position="1051"/>
        <end position="1556"/>
    </location>
</feature>
<feature type="sequence variant" id="VAR_035905" description="In a breast cancer sample; somatic mutation." evidence="3">
    <original>A</original>
    <variation>E</variation>
    <location>
        <position position="586"/>
    </location>
</feature>
<feature type="sequence variant" id="VAR_035906" description="In a colorectal cancer sample; somatic mutation; dbSNP:rs771008735." evidence="3">
    <original>G</original>
    <variation>S</variation>
    <location>
        <position position="622"/>
    </location>
</feature>
<feature type="sequence variant" id="VAR_035907" description="In a breast cancer sample; somatic mutation; dbSNP:rs929297365." evidence="3">
    <original>V</original>
    <variation>M</variation>
    <location>
        <position position="1264"/>
    </location>
</feature>
<gene>
    <name type="primary">DIP2C</name>
    <name type="synonym">KIAA0934</name>
</gene>
<sequence length="1556" mass="170767">MADRSLEGMALPLEVRARLAELELELSEGDITQKGYEKKRSKLIGAYLPQPPRVDQALPQERRAPVTPSSASRYHRRRSSGSRDERYRSDVHTEAVQAALAKHKERKMAVPMPSKRRSLVVQTSMDAYTPPDTSSGSEDEGSVQGDSQGTPTSSQGSINMEHWISQAIHGSTTSTTSSSSTQSGGSGAAHRLADVMAQTHIENHSAPPDVTTYTSEHSIQVERPQGSTGSRTAPKYGNAELMETGDGVPVSSRVSAKIQQLVNTLKRPKRPPLREFFVDDFEELLEVQQPDPNQPKPEGAQMLAMRGEQLGVVTNWPPSLEAALQRWGTISPKAPCLTTMDTNGKPLYILTYGKLWTRSMKVAYSILHKLGTKQEPMVRPGDRVALVFPNNDPAAFMAAFYGCLLAEVVPVPIEVPLTRKDAGSQQIGFLLGSCGVTVALTSDACHKGLPKSPTGEIPQFKGWPKLLWFVTESKHLSKPPRDWFPHIKDANNDTAYIEYKTCKDGSVLGVTVTRTALLTHCQALTQACGYTEAETIVNVLDFKKDVGLWHGILTSVMNMMHVISIPYSLMKVNPLSWIQKVCQYKAKVACVKSRDMHWALVAHRDQRDINLSSLRMLIVADGANPWSISSCDAFLNVFQSKGLRQEVICPCASSPEALTVAIRRPTDDSNQPPGRGVLSMHGLTYGVIRVDSEEKLSVLTVQDVGLVMPGAIMCSVKPDGVPQLCRTDEIGELCVCAVATGTSYYGLSGMTKNTFEVFPMTSSGAPISEYPFIRTGLLGFVGPGGLVFVVGKMDGLMVVSGRRHNADDIVATALAVEPMKFVYRGRIAVFSVTVLHDERIVIVAEQRPDSTEEDSFQWMSRVLQAIDSIHQVGVYCLALVPANTLPKTPLGGIHLSETKQLFLEGSLHPCNVLMCPHTCVTNLPKPRQKQPEIGPASVMVGNLVSGKRIAQASGRDLGQIEDNDQARKFLFLSEVLQWRAQTTPDHILYTLLNCRGAIANSLTCVQLHKRAEKIAVMLMERGHLQDGDHVALVYPPGIDLIAAFYGCLYAGCVPITVRPPHPQNIATTLPTVKMIVEVSRSACLMTTQLICKLLRSREAAAAVDVRTWPLILDTDDLPKKRPAQICKPCNPDTLAYLDFSVSTTGMLAGVKMSHAATSAFCRSIKLQCELYPSREVAICLDPYCGLGFVLWCLCSVYSGHQSILIPPSELETNPALWLLAVSQYKVRDTFCSYSVMELCTKGLGSQTESLKARGLDLSRVRTCVVVAEERPRIALTQSFSKLFKDLGLHPRAVSTSFGCRVNLAICLQGTSGPDPTTVYVDMRALRHDRVRLVERGSPHSLPLMESGKILPGVRIIIANPETKGPLGDSHLGEIWVHSAHNASGYFTIYGDESLQSDHFNSRLSFGDTQTIWARTGYLGFLRRTELTDANGERHDALYVVGALDEAMELRGMRYHPIDIETSVIRAHKSVTECAVFTWTNLLVVVVELDGSEQEALDLVPLVTNVVLEEHYLIVGVVVVVDIGVIPINSRGEKQRMHLRDGFLADQLDPIYVAYNM</sequence>
<comment type="alternative products">
    <event type="alternative splicing"/>
    <isoform>
        <id>Q9Y2E4-1</id>
        <name>1</name>
        <sequence type="displayed"/>
    </isoform>
    <isoform>
        <id>Q9Y2E4-2</id>
        <name>2</name>
        <sequence type="described" ref="VSP_056898 VSP_056899 VSP_056900"/>
    </isoform>
</comment>
<comment type="similarity">
    <text evidence="5">Belongs to the DIP2 family.</text>
</comment>
<comment type="sequence caution" evidence="5">
    <conflict type="erroneous initiation">
        <sequence resource="EMBL-CDS" id="BAA76778"/>
    </conflict>
</comment>
<accession>Q9Y2E4</accession>
<accession>B4DPI5</accession>
<accession>Q5SS78</accession>
<dbReference type="EMBL" id="AB023151">
    <property type="protein sequence ID" value="BAA76778.2"/>
    <property type="status" value="ALT_INIT"/>
    <property type="molecule type" value="mRNA"/>
</dbReference>
<dbReference type="EMBL" id="AK298353">
    <property type="protein sequence ID" value="BAG60597.1"/>
    <property type="molecule type" value="mRNA"/>
</dbReference>
<dbReference type="EMBL" id="AL358216">
    <property type="status" value="NOT_ANNOTATED_CDS"/>
    <property type="molecule type" value="Genomic_DNA"/>
</dbReference>
<dbReference type="EMBL" id="AL157709">
    <property type="status" value="NOT_ANNOTATED_CDS"/>
    <property type="molecule type" value="Genomic_DNA"/>
</dbReference>
<dbReference type="EMBL" id="AL359957">
    <property type="status" value="NOT_ANNOTATED_CDS"/>
    <property type="molecule type" value="Genomic_DNA"/>
</dbReference>
<dbReference type="EMBL" id="AL603831">
    <property type="status" value="NOT_ANNOTATED_CDS"/>
    <property type="molecule type" value="Genomic_DNA"/>
</dbReference>
<dbReference type="EMBL" id="AL669841">
    <property type="status" value="NOT_ANNOTATED_CDS"/>
    <property type="molecule type" value="Genomic_DNA"/>
</dbReference>
<dbReference type="EMBL" id="BC063313">
    <property type="protein sequence ID" value="AAH63313.1"/>
    <property type="molecule type" value="mRNA"/>
</dbReference>
<dbReference type="CCDS" id="CCDS7054.1">
    <molecule id="Q9Y2E4-1"/>
</dbReference>
<dbReference type="RefSeq" id="NP_055789.1">
    <molecule id="Q9Y2E4-1"/>
    <property type="nucleotide sequence ID" value="NM_014974.3"/>
</dbReference>
<dbReference type="SMR" id="Q9Y2E4"/>
<dbReference type="BioGRID" id="116631">
    <property type="interactions" value="10"/>
</dbReference>
<dbReference type="FunCoup" id="Q9Y2E4">
    <property type="interactions" value="161"/>
</dbReference>
<dbReference type="IntAct" id="Q9Y2E4">
    <property type="interactions" value="5"/>
</dbReference>
<dbReference type="STRING" id="9606.ENSP00000280886"/>
<dbReference type="CarbonylDB" id="Q9Y2E4"/>
<dbReference type="GlyGen" id="Q9Y2E4">
    <property type="glycosylation" value="2 sites, 1 O-linked glycan (1 site)"/>
</dbReference>
<dbReference type="iPTMnet" id="Q9Y2E4"/>
<dbReference type="PhosphoSitePlus" id="Q9Y2E4"/>
<dbReference type="SwissPalm" id="Q9Y2E4"/>
<dbReference type="BioMuta" id="DIP2C"/>
<dbReference type="DMDM" id="29429225"/>
<dbReference type="jPOST" id="Q9Y2E4"/>
<dbReference type="MassIVE" id="Q9Y2E4"/>
<dbReference type="PaxDb" id="9606-ENSP00000280886"/>
<dbReference type="PeptideAtlas" id="Q9Y2E4"/>
<dbReference type="ProteomicsDB" id="4789"/>
<dbReference type="ProteomicsDB" id="85746">
    <molecule id="Q9Y2E4-1"/>
</dbReference>
<dbReference type="Pumba" id="Q9Y2E4"/>
<dbReference type="Antibodypedia" id="23712">
    <property type="antibodies" value="22 antibodies from 9 providers"/>
</dbReference>
<dbReference type="DNASU" id="22982"/>
<dbReference type="Ensembl" id="ENST00000280886.12">
    <molecule id="Q9Y2E4-1"/>
    <property type="protein sequence ID" value="ENSP00000280886.6"/>
    <property type="gene ID" value="ENSG00000151240.18"/>
</dbReference>
<dbReference type="GeneID" id="22982"/>
<dbReference type="KEGG" id="hsa:22982"/>
<dbReference type="MANE-Select" id="ENST00000280886.12">
    <property type="protein sequence ID" value="ENSP00000280886.6"/>
    <property type="RefSeq nucleotide sequence ID" value="NM_014974.3"/>
    <property type="RefSeq protein sequence ID" value="NP_055789.1"/>
</dbReference>
<dbReference type="UCSC" id="uc001ifp.4">
    <molecule id="Q9Y2E4-1"/>
    <property type="organism name" value="human"/>
</dbReference>
<dbReference type="AGR" id="HGNC:29150"/>
<dbReference type="CTD" id="22982"/>
<dbReference type="DisGeNET" id="22982"/>
<dbReference type="GeneCards" id="DIP2C"/>
<dbReference type="HGNC" id="HGNC:29150">
    <property type="gene designation" value="DIP2C"/>
</dbReference>
<dbReference type="HPA" id="ENSG00000151240">
    <property type="expression patterns" value="Low tissue specificity"/>
</dbReference>
<dbReference type="MalaCards" id="DIP2C"/>
<dbReference type="MIM" id="611380">
    <property type="type" value="gene"/>
</dbReference>
<dbReference type="neXtProt" id="NX_Q9Y2E4"/>
<dbReference type="OpenTargets" id="ENSG00000151240"/>
<dbReference type="PharmGKB" id="PA134961070"/>
<dbReference type="VEuPathDB" id="HostDB:ENSG00000151240"/>
<dbReference type="eggNOG" id="KOG3628">
    <property type="taxonomic scope" value="Eukaryota"/>
</dbReference>
<dbReference type="GeneTree" id="ENSGT00950000182997"/>
<dbReference type="HOGENOM" id="CLU_001345_0_0_1"/>
<dbReference type="InParanoid" id="Q9Y2E4"/>
<dbReference type="OMA" id="LVWTYWT"/>
<dbReference type="OrthoDB" id="69964at2759"/>
<dbReference type="PAN-GO" id="Q9Y2E4">
    <property type="GO annotations" value="0 GO annotations based on evolutionary models"/>
</dbReference>
<dbReference type="PhylomeDB" id="Q9Y2E4"/>
<dbReference type="TreeFam" id="TF312871"/>
<dbReference type="PathwayCommons" id="Q9Y2E4"/>
<dbReference type="SignaLink" id="Q9Y2E4"/>
<dbReference type="BioGRID-ORCS" id="22982">
    <property type="hits" value="10 hits in 1154 CRISPR screens"/>
</dbReference>
<dbReference type="ChiTaRS" id="DIP2C">
    <property type="organism name" value="human"/>
</dbReference>
<dbReference type="GenomeRNAi" id="22982"/>
<dbReference type="Pharos" id="Q9Y2E4">
    <property type="development level" value="Tbio"/>
</dbReference>
<dbReference type="PRO" id="PR:Q9Y2E4"/>
<dbReference type="Proteomes" id="UP000005640">
    <property type="component" value="Chromosome 10"/>
</dbReference>
<dbReference type="RNAct" id="Q9Y2E4">
    <property type="molecule type" value="protein"/>
</dbReference>
<dbReference type="Bgee" id="ENSG00000151240">
    <property type="expression patterns" value="Expressed in cartilage tissue and 215 other cell types or tissues"/>
</dbReference>
<dbReference type="ExpressionAtlas" id="Q9Y2E4">
    <property type="expression patterns" value="baseline and differential"/>
</dbReference>
<dbReference type="CDD" id="cd05905">
    <property type="entry name" value="Dip2"/>
    <property type="match status" value="2"/>
</dbReference>
<dbReference type="FunFam" id="3.30.300.30:FF:000003">
    <property type="entry name" value="DIP2 disco-interacting protein 2 homolog A"/>
    <property type="match status" value="1"/>
</dbReference>
<dbReference type="FunFam" id="3.30.300.30:FF:000001">
    <property type="entry name" value="DIP2 disco-interacting protein 2 homolog C"/>
    <property type="match status" value="1"/>
</dbReference>
<dbReference type="Gene3D" id="3.30.300.30">
    <property type="match status" value="2"/>
</dbReference>
<dbReference type="Gene3D" id="3.40.50.12780">
    <property type="entry name" value="N-terminal domain of ligase-like"/>
    <property type="match status" value="2"/>
</dbReference>
<dbReference type="InterPro" id="IPR025110">
    <property type="entry name" value="AMP-bd_C"/>
</dbReference>
<dbReference type="InterPro" id="IPR045851">
    <property type="entry name" value="AMP-bd_C_sf"/>
</dbReference>
<dbReference type="InterPro" id="IPR000873">
    <property type="entry name" value="AMP-dep_synth/lig_dom"/>
</dbReference>
<dbReference type="InterPro" id="IPR042099">
    <property type="entry name" value="ANL_N_sf"/>
</dbReference>
<dbReference type="InterPro" id="IPR037337">
    <property type="entry name" value="Dip2-like_dom"/>
</dbReference>
<dbReference type="InterPro" id="IPR010506">
    <property type="entry name" value="DMAP1-bd"/>
</dbReference>
<dbReference type="PANTHER" id="PTHR22754">
    <property type="entry name" value="DISCO-INTERACTING PROTEIN 2 DIP2 -RELATED"/>
    <property type="match status" value="1"/>
</dbReference>
<dbReference type="PANTHER" id="PTHR22754:SF33">
    <property type="entry name" value="DISCO-INTERACTING PROTEIN 2 HOMOLOG C"/>
    <property type="match status" value="1"/>
</dbReference>
<dbReference type="Pfam" id="PF00501">
    <property type="entry name" value="AMP-binding"/>
    <property type="match status" value="2"/>
</dbReference>
<dbReference type="Pfam" id="PF23024">
    <property type="entry name" value="AMP-dom_DIP2-like"/>
    <property type="match status" value="1"/>
</dbReference>
<dbReference type="Pfam" id="PF06464">
    <property type="entry name" value="DMAP_binding"/>
    <property type="match status" value="1"/>
</dbReference>
<dbReference type="SMART" id="SM01137">
    <property type="entry name" value="DMAP_binding"/>
    <property type="match status" value="1"/>
</dbReference>
<dbReference type="SUPFAM" id="SSF56801">
    <property type="entry name" value="Acetyl-CoA synthetase-like"/>
    <property type="match status" value="2"/>
</dbReference>
<dbReference type="PROSITE" id="PS51912">
    <property type="entry name" value="DMAP1_BIND"/>
    <property type="match status" value="1"/>
</dbReference>
<keyword id="KW-0025">Alternative splicing</keyword>
<keyword id="KW-0597">Phosphoprotein</keyword>
<keyword id="KW-1267">Proteomics identification</keyword>
<keyword id="KW-1185">Reference proteome</keyword>
<reference key="1">
    <citation type="journal article" date="1999" name="DNA Res.">
        <title>Prediction of the coding sequences of unidentified human genes. XIII. The complete sequences of 100 new cDNA clones from brain which code for large proteins in vitro.</title>
        <authorList>
            <person name="Nagase T."/>
            <person name="Ishikawa K."/>
            <person name="Suyama M."/>
            <person name="Kikuno R."/>
            <person name="Hirosawa M."/>
            <person name="Miyajima N."/>
            <person name="Tanaka A."/>
            <person name="Kotani H."/>
            <person name="Nomura N."/>
            <person name="Ohara O."/>
        </authorList>
    </citation>
    <scope>NUCLEOTIDE SEQUENCE [LARGE SCALE MRNA] (ISOFORM 1)</scope>
    <source>
        <tissue>Brain</tissue>
    </source>
</reference>
<reference key="2">
    <citation type="journal article" date="2002" name="DNA Res.">
        <title>Construction of expression-ready cDNA clones for KIAA genes: manual curation of 330 KIAA cDNA clones.</title>
        <authorList>
            <person name="Nakajima D."/>
            <person name="Okazaki N."/>
            <person name="Yamakawa H."/>
            <person name="Kikuno R."/>
            <person name="Ohara O."/>
            <person name="Nagase T."/>
        </authorList>
    </citation>
    <scope>SEQUENCE REVISION</scope>
</reference>
<reference key="3">
    <citation type="journal article" date="2004" name="Nat. Genet.">
        <title>Complete sequencing and characterization of 21,243 full-length human cDNAs.</title>
        <authorList>
            <person name="Ota T."/>
            <person name="Suzuki Y."/>
            <person name="Nishikawa T."/>
            <person name="Otsuki T."/>
            <person name="Sugiyama T."/>
            <person name="Irie R."/>
            <person name="Wakamatsu A."/>
            <person name="Hayashi K."/>
            <person name="Sato H."/>
            <person name="Nagai K."/>
            <person name="Kimura K."/>
            <person name="Makita H."/>
            <person name="Sekine M."/>
            <person name="Obayashi M."/>
            <person name="Nishi T."/>
            <person name="Shibahara T."/>
            <person name="Tanaka T."/>
            <person name="Ishii S."/>
            <person name="Yamamoto J."/>
            <person name="Saito K."/>
            <person name="Kawai Y."/>
            <person name="Isono Y."/>
            <person name="Nakamura Y."/>
            <person name="Nagahari K."/>
            <person name="Murakami K."/>
            <person name="Yasuda T."/>
            <person name="Iwayanagi T."/>
            <person name="Wagatsuma M."/>
            <person name="Shiratori A."/>
            <person name="Sudo H."/>
            <person name="Hosoiri T."/>
            <person name="Kaku Y."/>
            <person name="Kodaira H."/>
            <person name="Kondo H."/>
            <person name="Sugawara M."/>
            <person name="Takahashi M."/>
            <person name="Kanda K."/>
            <person name="Yokoi T."/>
            <person name="Furuya T."/>
            <person name="Kikkawa E."/>
            <person name="Omura Y."/>
            <person name="Abe K."/>
            <person name="Kamihara K."/>
            <person name="Katsuta N."/>
            <person name="Sato K."/>
            <person name="Tanikawa M."/>
            <person name="Yamazaki M."/>
            <person name="Ninomiya K."/>
            <person name="Ishibashi T."/>
            <person name="Yamashita H."/>
            <person name="Murakawa K."/>
            <person name="Fujimori K."/>
            <person name="Tanai H."/>
            <person name="Kimata M."/>
            <person name="Watanabe M."/>
            <person name="Hiraoka S."/>
            <person name="Chiba Y."/>
            <person name="Ishida S."/>
            <person name="Ono Y."/>
            <person name="Takiguchi S."/>
            <person name="Watanabe S."/>
            <person name="Yosida M."/>
            <person name="Hotuta T."/>
            <person name="Kusano J."/>
            <person name="Kanehori K."/>
            <person name="Takahashi-Fujii A."/>
            <person name="Hara H."/>
            <person name="Tanase T.-O."/>
            <person name="Nomura Y."/>
            <person name="Togiya S."/>
            <person name="Komai F."/>
            <person name="Hara R."/>
            <person name="Takeuchi K."/>
            <person name="Arita M."/>
            <person name="Imose N."/>
            <person name="Musashino K."/>
            <person name="Yuuki H."/>
            <person name="Oshima A."/>
            <person name="Sasaki N."/>
            <person name="Aotsuka S."/>
            <person name="Yoshikawa Y."/>
            <person name="Matsunawa H."/>
            <person name="Ichihara T."/>
            <person name="Shiohata N."/>
            <person name="Sano S."/>
            <person name="Moriya S."/>
            <person name="Momiyama H."/>
            <person name="Satoh N."/>
            <person name="Takami S."/>
            <person name="Terashima Y."/>
            <person name="Suzuki O."/>
            <person name="Nakagawa S."/>
            <person name="Senoh A."/>
            <person name="Mizoguchi H."/>
            <person name="Goto Y."/>
            <person name="Shimizu F."/>
            <person name="Wakebe H."/>
            <person name="Hishigaki H."/>
            <person name="Watanabe T."/>
            <person name="Sugiyama A."/>
            <person name="Takemoto M."/>
            <person name="Kawakami B."/>
            <person name="Yamazaki M."/>
            <person name="Watanabe K."/>
            <person name="Kumagai A."/>
            <person name="Itakura S."/>
            <person name="Fukuzumi Y."/>
            <person name="Fujimori Y."/>
            <person name="Komiyama M."/>
            <person name="Tashiro H."/>
            <person name="Tanigami A."/>
            <person name="Fujiwara T."/>
            <person name="Ono T."/>
            <person name="Yamada K."/>
            <person name="Fujii Y."/>
            <person name="Ozaki K."/>
            <person name="Hirao M."/>
            <person name="Ohmori Y."/>
            <person name="Kawabata A."/>
            <person name="Hikiji T."/>
            <person name="Kobatake N."/>
            <person name="Inagaki H."/>
            <person name="Ikema Y."/>
            <person name="Okamoto S."/>
            <person name="Okitani R."/>
            <person name="Kawakami T."/>
            <person name="Noguchi S."/>
            <person name="Itoh T."/>
            <person name="Shigeta K."/>
            <person name="Senba T."/>
            <person name="Matsumura K."/>
            <person name="Nakajima Y."/>
            <person name="Mizuno T."/>
            <person name="Morinaga M."/>
            <person name="Sasaki M."/>
            <person name="Togashi T."/>
            <person name="Oyama M."/>
            <person name="Hata H."/>
            <person name="Watanabe M."/>
            <person name="Komatsu T."/>
            <person name="Mizushima-Sugano J."/>
            <person name="Satoh T."/>
            <person name="Shirai Y."/>
            <person name="Takahashi Y."/>
            <person name="Nakagawa K."/>
            <person name="Okumura K."/>
            <person name="Nagase T."/>
            <person name="Nomura N."/>
            <person name="Kikuchi H."/>
            <person name="Masuho Y."/>
            <person name="Yamashita R."/>
            <person name="Nakai K."/>
            <person name="Yada T."/>
            <person name="Nakamura Y."/>
            <person name="Ohara O."/>
            <person name="Isogai T."/>
            <person name="Sugano S."/>
        </authorList>
    </citation>
    <scope>NUCLEOTIDE SEQUENCE [LARGE SCALE MRNA] (ISOFORM 2)</scope>
    <source>
        <tissue>Kidney</tissue>
    </source>
</reference>
<reference key="4">
    <citation type="journal article" date="2004" name="Nature">
        <title>The DNA sequence and comparative analysis of human chromosome 10.</title>
        <authorList>
            <person name="Deloukas P."/>
            <person name="Earthrowl M.E."/>
            <person name="Grafham D.V."/>
            <person name="Rubenfield M."/>
            <person name="French L."/>
            <person name="Steward C.A."/>
            <person name="Sims S.K."/>
            <person name="Jones M.C."/>
            <person name="Searle S."/>
            <person name="Scott C."/>
            <person name="Howe K."/>
            <person name="Hunt S.E."/>
            <person name="Andrews T.D."/>
            <person name="Gilbert J.G.R."/>
            <person name="Swarbreck D."/>
            <person name="Ashurst J.L."/>
            <person name="Taylor A."/>
            <person name="Battles J."/>
            <person name="Bird C.P."/>
            <person name="Ainscough R."/>
            <person name="Almeida J.P."/>
            <person name="Ashwell R.I.S."/>
            <person name="Ambrose K.D."/>
            <person name="Babbage A.K."/>
            <person name="Bagguley C.L."/>
            <person name="Bailey J."/>
            <person name="Banerjee R."/>
            <person name="Bates K."/>
            <person name="Beasley H."/>
            <person name="Bray-Allen S."/>
            <person name="Brown A.J."/>
            <person name="Brown J.Y."/>
            <person name="Burford D.C."/>
            <person name="Burrill W."/>
            <person name="Burton J."/>
            <person name="Cahill P."/>
            <person name="Camire D."/>
            <person name="Carter N.P."/>
            <person name="Chapman J.C."/>
            <person name="Clark S.Y."/>
            <person name="Clarke G."/>
            <person name="Clee C.M."/>
            <person name="Clegg S."/>
            <person name="Corby N."/>
            <person name="Coulson A."/>
            <person name="Dhami P."/>
            <person name="Dutta I."/>
            <person name="Dunn M."/>
            <person name="Faulkner L."/>
            <person name="Frankish A."/>
            <person name="Frankland J.A."/>
            <person name="Garner P."/>
            <person name="Garnett J."/>
            <person name="Gribble S."/>
            <person name="Griffiths C."/>
            <person name="Grocock R."/>
            <person name="Gustafson E."/>
            <person name="Hammond S."/>
            <person name="Harley J.L."/>
            <person name="Hart E."/>
            <person name="Heath P.D."/>
            <person name="Ho T.P."/>
            <person name="Hopkins B."/>
            <person name="Horne J."/>
            <person name="Howden P.J."/>
            <person name="Huckle E."/>
            <person name="Hynds C."/>
            <person name="Johnson C."/>
            <person name="Johnson D."/>
            <person name="Kana A."/>
            <person name="Kay M."/>
            <person name="Kimberley A.M."/>
            <person name="Kershaw J.K."/>
            <person name="Kokkinaki M."/>
            <person name="Laird G.K."/>
            <person name="Lawlor S."/>
            <person name="Lee H.M."/>
            <person name="Leongamornlert D.A."/>
            <person name="Laird G."/>
            <person name="Lloyd C."/>
            <person name="Lloyd D.M."/>
            <person name="Loveland J."/>
            <person name="Lovell J."/>
            <person name="McLaren S."/>
            <person name="McLay K.E."/>
            <person name="McMurray A."/>
            <person name="Mashreghi-Mohammadi M."/>
            <person name="Matthews L."/>
            <person name="Milne S."/>
            <person name="Nickerson T."/>
            <person name="Nguyen M."/>
            <person name="Overton-Larty E."/>
            <person name="Palmer S.A."/>
            <person name="Pearce A.V."/>
            <person name="Peck A.I."/>
            <person name="Pelan S."/>
            <person name="Phillimore B."/>
            <person name="Porter K."/>
            <person name="Rice C.M."/>
            <person name="Rogosin A."/>
            <person name="Ross M.T."/>
            <person name="Sarafidou T."/>
            <person name="Sehra H.K."/>
            <person name="Shownkeen R."/>
            <person name="Skuce C.D."/>
            <person name="Smith M."/>
            <person name="Standring L."/>
            <person name="Sycamore N."/>
            <person name="Tester J."/>
            <person name="Thorpe A."/>
            <person name="Torcasso W."/>
            <person name="Tracey A."/>
            <person name="Tromans A."/>
            <person name="Tsolas J."/>
            <person name="Wall M."/>
            <person name="Walsh J."/>
            <person name="Wang H."/>
            <person name="Weinstock K."/>
            <person name="West A.P."/>
            <person name="Willey D.L."/>
            <person name="Whitehead S.L."/>
            <person name="Wilming L."/>
            <person name="Wray P.W."/>
            <person name="Young L."/>
            <person name="Chen Y."/>
            <person name="Lovering R.C."/>
            <person name="Moschonas N.K."/>
            <person name="Siebert R."/>
            <person name="Fechtel K."/>
            <person name="Bentley D."/>
            <person name="Durbin R.M."/>
            <person name="Hubbard T."/>
            <person name="Doucette-Stamm L."/>
            <person name="Beck S."/>
            <person name="Smith D.R."/>
            <person name="Rogers J."/>
        </authorList>
    </citation>
    <scope>NUCLEOTIDE SEQUENCE [LARGE SCALE GENOMIC DNA]</scope>
</reference>
<reference key="5">
    <citation type="journal article" date="2004" name="Genome Res.">
        <title>The status, quality, and expansion of the NIH full-length cDNA project: the Mammalian Gene Collection (MGC).</title>
        <authorList>
            <consortium name="The MGC Project Team"/>
        </authorList>
    </citation>
    <scope>NUCLEOTIDE SEQUENCE [LARGE SCALE MRNA] (ISOFORM 1)</scope>
    <source>
        <tissue>Placenta</tissue>
    </source>
</reference>
<reference key="6">
    <citation type="journal article" date="2014" name="J. Proteomics">
        <title>An enzyme assisted RP-RPLC approach for in-depth analysis of human liver phosphoproteome.</title>
        <authorList>
            <person name="Bian Y."/>
            <person name="Song C."/>
            <person name="Cheng K."/>
            <person name="Dong M."/>
            <person name="Wang F."/>
            <person name="Huang J."/>
            <person name="Sun D."/>
            <person name="Wang L."/>
            <person name="Ye M."/>
            <person name="Zou H."/>
        </authorList>
    </citation>
    <scope>PHOSPHORYLATION [LARGE SCALE ANALYSIS] AT THR-264</scope>
    <scope>IDENTIFICATION BY MASS SPECTROMETRY [LARGE SCALE ANALYSIS]</scope>
    <source>
        <tissue>Liver</tissue>
    </source>
</reference>
<reference key="7">
    <citation type="journal article" date="2006" name="Science">
        <title>The consensus coding sequences of human breast and colorectal cancers.</title>
        <authorList>
            <person name="Sjoeblom T."/>
            <person name="Jones S."/>
            <person name="Wood L.D."/>
            <person name="Parsons D.W."/>
            <person name="Lin J."/>
            <person name="Barber T.D."/>
            <person name="Mandelker D."/>
            <person name="Leary R.J."/>
            <person name="Ptak J."/>
            <person name="Silliman N."/>
            <person name="Szabo S."/>
            <person name="Buckhaults P."/>
            <person name="Farrell C."/>
            <person name="Meeh P."/>
            <person name="Markowitz S.D."/>
            <person name="Willis J."/>
            <person name="Dawson D."/>
            <person name="Willson J.K.V."/>
            <person name="Gazdar A.F."/>
            <person name="Hartigan J."/>
            <person name="Wu L."/>
            <person name="Liu C."/>
            <person name="Parmigiani G."/>
            <person name="Park B.H."/>
            <person name="Bachman K.E."/>
            <person name="Papadopoulos N."/>
            <person name="Vogelstein B."/>
            <person name="Kinzler K.W."/>
            <person name="Velculescu V.E."/>
        </authorList>
    </citation>
    <scope>VARIANTS [LARGE SCALE ANALYSIS] GLU-586; SER-622 AND MET-1264</scope>
</reference>
<proteinExistence type="evidence at protein level"/>
<evidence type="ECO:0000255" key="1">
    <source>
        <dbReference type="PROSITE-ProRule" id="PRU01260"/>
    </source>
</evidence>
<evidence type="ECO:0000256" key="2">
    <source>
        <dbReference type="SAM" id="MobiDB-lite"/>
    </source>
</evidence>
<evidence type="ECO:0000269" key="3">
    <source>
    </source>
</evidence>
<evidence type="ECO:0000303" key="4">
    <source>
    </source>
</evidence>
<evidence type="ECO:0000305" key="5"/>
<evidence type="ECO:0007744" key="6">
    <source>
    </source>
</evidence>
<name>DIP2C_HUMAN</name>